<reference key="1">
    <citation type="journal article" date="2009" name="PLoS Genet.">
        <title>Organised genome dynamics in the Escherichia coli species results in highly diverse adaptive paths.</title>
        <authorList>
            <person name="Touchon M."/>
            <person name="Hoede C."/>
            <person name="Tenaillon O."/>
            <person name="Barbe V."/>
            <person name="Baeriswyl S."/>
            <person name="Bidet P."/>
            <person name="Bingen E."/>
            <person name="Bonacorsi S."/>
            <person name="Bouchier C."/>
            <person name="Bouvet O."/>
            <person name="Calteau A."/>
            <person name="Chiapello H."/>
            <person name="Clermont O."/>
            <person name="Cruveiller S."/>
            <person name="Danchin A."/>
            <person name="Diard M."/>
            <person name="Dossat C."/>
            <person name="Karoui M.E."/>
            <person name="Frapy E."/>
            <person name="Garry L."/>
            <person name="Ghigo J.M."/>
            <person name="Gilles A.M."/>
            <person name="Johnson J."/>
            <person name="Le Bouguenec C."/>
            <person name="Lescat M."/>
            <person name="Mangenot S."/>
            <person name="Martinez-Jehanne V."/>
            <person name="Matic I."/>
            <person name="Nassif X."/>
            <person name="Oztas S."/>
            <person name="Petit M.A."/>
            <person name="Pichon C."/>
            <person name="Rouy Z."/>
            <person name="Ruf C.S."/>
            <person name="Schneider D."/>
            <person name="Tourret J."/>
            <person name="Vacherie B."/>
            <person name="Vallenet D."/>
            <person name="Medigue C."/>
            <person name="Rocha E.P.C."/>
            <person name="Denamur E."/>
        </authorList>
    </citation>
    <scope>NUCLEOTIDE SEQUENCE [LARGE SCALE GENOMIC DNA]</scope>
    <source>
        <strain>55989 / EAEC</strain>
    </source>
</reference>
<dbReference type="EC" id="2.7.7.27" evidence="1"/>
<dbReference type="EMBL" id="CU928145">
    <property type="protein sequence ID" value="CAV00216.1"/>
    <property type="molecule type" value="Genomic_DNA"/>
</dbReference>
<dbReference type="RefSeq" id="WP_000253975.1">
    <property type="nucleotide sequence ID" value="NC_011748.1"/>
</dbReference>
<dbReference type="SMR" id="B7L4W0"/>
<dbReference type="GeneID" id="93778559"/>
<dbReference type="KEGG" id="eck:EC55989_3840"/>
<dbReference type="HOGENOM" id="CLU_029499_14_1_6"/>
<dbReference type="UniPathway" id="UPA00164"/>
<dbReference type="Proteomes" id="UP000000746">
    <property type="component" value="Chromosome"/>
</dbReference>
<dbReference type="GO" id="GO:0005524">
    <property type="term" value="F:ATP binding"/>
    <property type="evidence" value="ECO:0007669"/>
    <property type="project" value="UniProtKB-KW"/>
</dbReference>
<dbReference type="GO" id="GO:0008878">
    <property type="term" value="F:glucose-1-phosphate adenylyltransferase activity"/>
    <property type="evidence" value="ECO:0007669"/>
    <property type="project" value="UniProtKB-UniRule"/>
</dbReference>
<dbReference type="GO" id="GO:0005978">
    <property type="term" value="P:glycogen biosynthetic process"/>
    <property type="evidence" value="ECO:0007669"/>
    <property type="project" value="UniProtKB-UniRule"/>
</dbReference>
<dbReference type="CDD" id="cd02508">
    <property type="entry name" value="ADP_Glucose_PP"/>
    <property type="match status" value="1"/>
</dbReference>
<dbReference type="CDD" id="cd04651">
    <property type="entry name" value="LbH_G1P_AT_C"/>
    <property type="match status" value="1"/>
</dbReference>
<dbReference type="FunFam" id="2.160.10.10:FF:000006">
    <property type="entry name" value="Glucose-1-phosphate adenylyltransferase"/>
    <property type="match status" value="1"/>
</dbReference>
<dbReference type="FunFam" id="3.90.550.10:FF:000014">
    <property type="entry name" value="Glucose-1-phosphate adenylyltransferase"/>
    <property type="match status" value="1"/>
</dbReference>
<dbReference type="Gene3D" id="2.160.10.10">
    <property type="entry name" value="Hexapeptide repeat proteins"/>
    <property type="match status" value="1"/>
</dbReference>
<dbReference type="Gene3D" id="3.90.550.10">
    <property type="entry name" value="Spore Coat Polysaccharide Biosynthesis Protein SpsA, Chain A"/>
    <property type="match status" value="1"/>
</dbReference>
<dbReference type="HAMAP" id="MF_00624">
    <property type="entry name" value="GlgC"/>
    <property type="match status" value="1"/>
</dbReference>
<dbReference type="InterPro" id="IPR011831">
    <property type="entry name" value="ADP-Glc_PPase"/>
</dbReference>
<dbReference type="InterPro" id="IPR005836">
    <property type="entry name" value="ADP_Glu_pyroP_CS"/>
</dbReference>
<dbReference type="InterPro" id="IPR023049">
    <property type="entry name" value="GlgC_bac"/>
</dbReference>
<dbReference type="InterPro" id="IPR056818">
    <property type="entry name" value="GlmU/GlgC-like_hexapep"/>
</dbReference>
<dbReference type="InterPro" id="IPR005835">
    <property type="entry name" value="NTP_transferase_dom"/>
</dbReference>
<dbReference type="InterPro" id="IPR029044">
    <property type="entry name" value="Nucleotide-diphossugar_trans"/>
</dbReference>
<dbReference type="InterPro" id="IPR011004">
    <property type="entry name" value="Trimer_LpxA-like_sf"/>
</dbReference>
<dbReference type="NCBIfam" id="TIGR02091">
    <property type="entry name" value="glgC"/>
    <property type="match status" value="1"/>
</dbReference>
<dbReference type="NCBIfam" id="NF001947">
    <property type="entry name" value="PRK00725.1"/>
    <property type="match status" value="1"/>
</dbReference>
<dbReference type="NCBIfam" id="NF002023">
    <property type="entry name" value="PRK00844.1"/>
    <property type="match status" value="1"/>
</dbReference>
<dbReference type="PANTHER" id="PTHR43523:SF2">
    <property type="entry name" value="GLUCOSE-1-PHOSPHATE ADENYLYLTRANSFERASE"/>
    <property type="match status" value="1"/>
</dbReference>
<dbReference type="PANTHER" id="PTHR43523">
    <property type="entry name" value="GLUCOSE-1-PHOSPHATE ADENYLYLTRANSFERASE-RELATED"/>
    <property type="match status" value="1"/>
</dbReference>
<dbReference type="Pfam" id="PF24894">
    <property type="entry name" value="Hexapep_GlmU"/>
    <property type="match status" value="1"/>
</dbReference>
<dbReference type="Pfam" id="PF00483">
    <property type="entry name" value="NTP_transferase"/>
    <property type="match status" value="1"/>
</dbReference>
<dbReference type="SUPFAM" id="SSF53448">
    <property type="entry name" value="Nucleotide-diphospho-sugar transferases"/>
    <property type="match status" value="1"/>
</dbReference>
<dbReference type="SUPFAM" id="SSF51161">
    <property type="entry name" value="Trimeric LpxA-like enzymes"/>
    <property type="match status" value="1"/>
</dbReference>
<dbReference type="PROSITE" id="PS00808">
    <property type="entry name" value="ADP_GLC_PYROPHOSPH_1"/>
    <property type="match status" value="1"/>
</dbReference>
<dbReference type="PROSITE" id="PS00809">
    <property type="entry name" value="ADP_GLC_PYROPHOSPH_2"/>
    <property type="match status" value="1"/>
</dbReference>
<dbReference type="PROSITE" id="PS00810">
    <property type="entry name" value="ADP_GLC_PYROPHOSPH_3"/>
    <property type="match status" value="1"/>
</dbReference>
<comment type="function">
    <text evidence="1">Involved in the biosynthesis of ADP-glucose, a building block required for the elongation reactions to produce glycogen. Catalyzes the reaction between ATP and alpha-D-glucose 1-phosphate (G1P) to produce pyrophosphate and ADP-Glc.</text>
</comment>
<comment type="catalytic activity">
    <reaction evidence="1">
        <text>alpha-D-glucose 1-phosphate + ATP + H(+) = ADP-alpha-D-glucose + diphosphate</text>
        <dbReference type="Rhea" id="RHEA:12120"/>
        <dbReference type="ChEBI" id="CHEBI:15378"/>
        <dbReference type="ChEBI" id="CHEBI:30616"/>
        <dbReference type="ChEBI" id="CHEBI:33019"/>
        <dbReference type="ChEBI" id="CHEBI:57498"/>
        <dbReference type="ChEBI" id="CHEBI:58601"/>
        <dbReference type="EC" id="2.7.7.27"/>
    </reaction>
</comment>
<comment type="activity regulation">
    <text evidence="1">Allosterically activated by fructose-1,6-bisphosphate (F16BP) and inhibited by AMP.</text>
</comment>
<comment type="pathway">
    <text evidence="1">Glycan biosynthesis; glycogen biosynthesis.</text>
</comment>
<comment type="subunit">
    <text evidence="1">Homotetramer.</text>
</comment>
<comment type="similarity">
    <text evidence="1">Belongs to the bacterial/plant glucose-1-phosphate adenylyltransferase family.</text>
</comment>
<feature type="chain" id="PRO_1000147227" description="Glucose-1-phosphate adenylyltransferase">
    <location>
        <begin position="1"/>
        <end position="431"/>
    </location>
</feature>
<feature type="binding site" evidence="1">
    <location>
        <position position="39"/>
    </location>
    <ligand>
        <name>beta-D-fructose 1,6-bisphosphate</name>
        <dbReference type="ChEBI" id="CHEBI:32966"/>
    </ligand>
</feature>
<feature type="binding site" evidence="1">
    <location>
        <position position="40"/>
    </location>
    <ligand>
        <name>AMP</name>
        <dbReference type="ChEBI" id="CHEBI:456215"/>
    </ligand>
</feature>
<feature type="binding site" evidence="1">
    <location>
        <position position="46"/>
    </location>
    <ligand>
        <name>AMP</name>
        <dbReference type="ChEBI" id="CHEBI:456215"/>
    </ligand>
</feature>
<feature type="binding site" evidence="1">
    <location>
        <position position="52"/>
    </location>
    <ligand>
        <name>AMP</name>
        <dbReference type="ChEBI" id="CHEBI:456215"/>
    </ligand>
</feature>
<feature type="binding site" evidence="1">
    <location>
        <position position="114"/>
    </location>
    <ligand>
        <name>alpha-D-glucose 1-phosphate</name>
        <dbReference type="ChEBI" id="CHEBI:58601"/>
    </ligand>
</feature>
<feature type="binding site" evidence="1">
    <location>
        <position position="130"/>
    </location>
    <ligand>
        <name>AMP</name>
        <dbReference type="ChEBI" id="CHEBI:456215"/>
    </ligand>
</feature>
<feature type="binding site" evidence="1">
    <location>
        <position position="179"/>
    </location>
    <ligand>
        <name>alpha-D-glucose 1-phosphate</name>
        <dbReference type="ChEBI" id="CHEBI:58601"/>
    </ligand>
</feature>
<feature type="binding site" evidence="1">
    <location>
        <begin position="194"/>
        <end position="195"/>
    </location>
    <ligand>
        <name>alpha-D-glucose 1-phosphate</name>
        <dbReference type="ChEBI" id="CHEBI:58601"/>
    </ligand>
</feature>
<feature type="binding site" evidence="1">
    <location>
        <position position="212"/>
    </location>
    <ligand>
        <name>alpha-D-glucose 1-phosphate</name>
        <dbReference type="ChEBI" id="CHEBI:58601"/>
    </ligand>
</feature>
<feature type="binding site" evidence="1">
    <location>
        <position position="370"/>
    </location>
    <ligand>
        <name>AMP</name>
        <dbReference type="ChEBI" id="CHEBI:456215"/>
    </ligand>
</feature>
<feature type="binding site" evidence="1">
    <location>
        <position position="386"/>
    </location>
    <ligand>
        <name>AMP</name>
        <dbReference type="ChEBI" id="CHEBI:456215"/>
    </ligand>
</feature>
<feature type="binding site" evidence="1">
    <location>
        <begin position="419"/>
        <end position="423"/>
    </location>
    <ligand>
        <name>beta-D-fructose 1,6-bisphosphate</name>
        <dbReference type="ChEBI" id="CHEBI:32966"/>
    </ligand>
</feature>
<feature type="binding site" evidence="1">
    <location>
        <begin position="429"/>
        <end position="431"/>
    </location>
    <ligand>
        <name>beta-D-fructose 1,6-bisphosphate</name>
        <dbReference type="ChEBI" id="CHEBI:32966"/>
    </ligand>
</feature>
<feature type="site" description="Could play a key role in the communication between the regulatory and the substrate sites" evidence="1">
    <location>
        <position position="74"/>
    </location>
</feature>
<feature type="site" description="Could play a key role in the communication between the regulatory and the substrate sites" evidence="1">
    <location>
        <position position="113"/>
    </location>
</feature>
<gene>
    <name evidence="1" type="primary">glgC</name>
    <name type="ordered locus">EC55989_3840</name>
</gene>
<evidence type="ECO:0000255" key="1">
    <source>
        <dbReference type="HAMAP-Rule" id="MF_00624"/>
    </source>
</evidence>
<protein>
    <recommendedName>
        <fullName evidence="1">Glucose-1-phosphate adenylyltransferase</fullName>
        <ecNumber evidence="1">2.7.7.27</ecNumber>
    </recommendedName>
    <alternativeName>
        <fullName evidence="1">ADP-glucose pyrophosphorylase</fullName>
        <shortName evidence="1">ADPGlc PPase</shortName>
    </alternativeName>
    <alternativeName>
        <fullName evidence="1">ADP-glucose synthase</fullName>
    </alternativeName>
</protein>
<accession>B7L4W0</accession>
<keyword id="KW-0021">Allosteric enzyme</keyword>
<keyword id="KW-0067">ATP-binding</keyword>
<keyword id="KW-0119">Carbohydrate metabolism</keyword>
<keyword id="KW-0320">Glycogen biosynthesis</keyword>
<keyword id="KW-0321">Glycogen metabolism</keyword>
<keyword id="KW-0547">Nucleotide-binding</keyword>
<keyword id="KW-0548">Nucleotidyltransferase</keyword>
<keyword id="KW-1185">Reference proteome</keyword>
<keyword id="KW-0808">Transferase</keyword>
<name>GLGC_ECO55</name>
<proteinExistence type="inferred from homology"/>
<organism>
    <name type="scientific">Escherichia coli (strain 55989 / EAEC)</name>
    <dbReference type="NCBI Taxonomy" id="585055"/>
    <lineage>
        <taxon>Bacteria</taxon>
        <taxon>Pseudomonadati</taxon>
        <taxon>Pseudomonadota</taxon>
        <taxon>Gammaproteobacteria</taxon>
        <taxon>Enterobacterales</taxon>
        <taxon>Enterobacteriaceae</taxon>
        <taxon>Escherichia</taxon>
    </lineage>
</organism>
<sequence>MVSLEKNDHLMLARQLPLKSVALILAGGRGTRLKDLTNKRAKPAVHFGGKFRIIDFALSNCINSGIRRMGVITQYQSHTLVQHIQRGWSFFNEEMNEFVDLLPAQQRMKGENWYRGTADAVTQNLDIIRRYKAEYVVILAGDHIYKQDYSRMLIDHVEKGARCTVACMPVPIEEASAFGVMAVDENDKIIEFVEKPANPPSMPNDPSKSLASMGIYVFDADYLYELLEEDDRDENSSHDFGKDLIPKITEAGLAYAHPFPLSCVQSDPDAEPYWRDVGTLEAYWKANLDLASVVPELDMYDRNWPIRTYNESLPPAKFVQDRSGSHGMTLNSLVSGGCVISGSVVVQSVLFSRVRVNSFCNIDSAVLLPEVWVGRSCRLRRCVIDRACVIPEGMVIGENAEEDARRFYRSEEGIVLVTREMLRKLGHKQER</sequence>